<protein>
    <recommendedName>
        <fullName evidence="1">Large ribosomal subunit protein uL5</fullName>
    </recommendedName>
    <alternativeName>
        <fullName evidence="2">50S ribosomal protein L5</fullName>
    </alternativeName>
</protein>
<evidence type="ECO:0000255" key="1">
    <source>
        <dbReference type="HAMAP-Rule" id="MF_01333"/>
    </source>
</evidence>
<evidence type="ECO:0000305" key="2"/>
<name>RL5_SYNS3</name>
<sequence>MSLKQRYRETIQPKLLKDLSLSNIHEVPKVLKVTVNRGLGEAATNAKSLEASVNELAQITGQKVVITRAKKAIAAFKIRQGMPIGCAVTLRGDRMYAFLERFINLALPRIRDFRGVSPKSFDGRGNYTVGVREQIIFPEISFDKIDAIRGMDITIVTSARTDEEGRALLREMGMPFRSN</sequence>
<feature type="chain" id="PRO_1000052851" description="Large ribosomal subunit protein uL5">
    <location>
        <begin position="1"/>
        <end position="179"/>
    </location>
</feature>
<comment type="function">
    <text evidence="1">This is one of the proteins that bind and probably mediate the attachment of the 5S RNA into the large ribosomal subunit, where it forms part of the central protuberance. In the 70S ribosome it contacts protein S13 of the 30S subunit (bridge B1b), connecting the 2 subunits; this bridge is implicated in subunit movement. Contacts the P site tRNA; the 5S rRNA and some of its associated proteins might help stabilize positioning of ribosome-bound tRNAs.</text>
</comment>
<comment type="subunit">
    <text evidence="1">Part of the 50S ribosomal subunit; part of the 5S rRNA/L5/L18/L25 subcomplex. Contacts the 5S rRNA and the P site tRNA. Forms a bridge to the 30S subunit in the 70S ribosome.</text>
</comment>
<comment type="similarity">
    <text evidence="1">Belongs to the universal ribosomal protein uL5 family.</text>
</comment>
<gene>
    <name evidence="1" type="primary">rplE</name>
    <name evidence="1" type="synonym">rpl5</name>
    <name type="ordered locus">sync_0425</name>
</gene>
<keyword id="KW-1185">Reference proteome</keyword>
<keyword id="KW-0687">Ribonucleoprotein</keyword>
<keyword id="KW-0689">Ribosomal protein</keyword>
<keyword id="KW-0694">RNA-binding</keyword>
<keyword id="KW-0699">rRNA-binding</keyword>
<keyword id="KW-0820">tRNA-binding</keyword>
<proteinExistence type="inferred from homology"/>
<dbReference type="EMBL" id="CP000435">
    <property type="protein sequence ID" value="ABI45541.1"/>
    <property type="molecule type" value="Genomic_DNA"/>
</dbReference>
<dbReference type="RefSeq" id="WP_006854816.1">
    <property type="nucleotide sequence ID" value="NC_008319.1"/>
</dbReference>
<dbReference type="SMR" id="Q0ID17"/>
<dbReference type="STRING" id="64471.sync_0425"/>
<dbReference type="KEGG" id="syg:sync_0425"/>
<dbReference type="eggNOG" id="COG0094">
    <property type="taxonomic scope" value="Bacteria"/>
</dbReference>
<dbReference type="HOGENOM" id="CLU_061015_2_1_3"/>
<dbReference type="OrthoDB" id="9806626at2"/>
<dbReference type="Proteomes" id="UP000001961">
    <property type="component" value="Chromosome"/>
</dbReference>
<dbReference type="GO" id="GO:1990904">
    <property type="term" value="C:ribonucleoprotein complex"/>
    <property type="evidence" value="ECO:0007669"/>
    <property type="project" value="UniProtKB-KW"/>
</dbReference>
<dbReference type="GO" id="GO:0005840">
    <property type="term" value="C:ribosome"/>
    <property type="evidence" value="ECO:0007669"/>
    <property type="project" value="UniProtKB-KW"/>
</dbReference>
<dbReference type="GO" id="GO:0019843">
    <property type="term" value="F:rRNA binding"/>
    <property type="evidence" value="ECO:0007669"/>
    <property type="project" value="UniProtKB-UniRule"/>
</dbReference>
<dbReference type="GO" id="GO:0003735">
    <property type="term" value="F:structural constituent of ribosome"/>
    <property type="evidence" value="ECO:0007669"/>
    <property type="project" value="InterPro"/>
</dbReference>
<dbReference type="GO" id="GO:0000049">
    <property type="term" value="F:tRNA binding"/>
    <property type="evidence" value="ECO:0007669"/>
    <property type="project" value="UniProtKB-UniRule"/>
</dbReference>
<dbReference type="GO" id="GO:0006412">
    <property type="term" value="P:translation"/>
    <property type="evidence" value="ECO:0007669"/>
    <property type="project" value="UniProtKB-UniRule"/>
</dbReference>
<dbReference type="FunFam" id="3.30.1440.10:FF:000001">
    <property type="entry name" value="50S ribosomal protein L5"/>
    <property type="match status" value="1"/>
</dbReference>
<dbReference type="Gene3D" id="3.30.1440.10">
    <property type="match status" value="1"/>
</dbReference>
<dbReference type="HAMAP" id="MF_01333_B">
    <property type="entry name" value="Ribosomal_uL5_B"/>
    <property type="match status" value="1"/>
</dbReference>
<dbReference type="InterPro" id="IPR002132">
    <property type="entry name" value="Ribosomal_uL5"/>
</dbReference>
<dbReference type="InterPro" id="IPR020930">
    <property type="entry name" value="Ribosomal_uL5_bac-type"/>
</dbReference>
<dbReference type="InterPro" id="IPR031309">
    <property type="entry name" value="Ribosomal_uL5_C"/>
</dbReference>
<dbReference type="InterPro" id="IPR020929">
    <property type="entry name" value="Ribosomal_uL5_CS"/>
</dbReference>
<dbReference type="InterPro" id="IPR022803">
    <property type="entry name" value="Ribosomal_uL5_dom_sf"/>
</dbReference>
<dbReference type="InterPro" id="IPR031310">
    <property type="entry name" value="Ribosomal_uL5_N"/>
</dbReference>
<dbReference type="NCBIfam" id="NF000585">
    <property type="entry name" value="PRK00010.1"/>
    <property type="match status" value="1"/>
</dbReference>
<dbReference type="PANTHER" id="PTHR11994">
    <property type="entry name" value="60S RIBOSOMAL PROTEIN L11-RELATED"/>
    <property type="match status" value="1"/>
</dbReference>
<dbReference type="Pfam" id="PF00281">
    <property type="entry name" value="Ribosomal_L5"/>
    <property type="match status" value="1"/>
</dbReference>
<dbReference type="Pfam" id="PF00673">
    <property type="entry name" value="Ribosomal_L5_C"/>
    <property type="match status" value="1"/>
</dbReference>
<dbReference type="PIRSF" id="PIRSF002161">
    <property type="entry name" value="Ribosomal_L5"/>
    <property type="match status" value="1"/>
</dbReference>
<dbReference type="SUPFAM" id="SSF55282">
    <property type="entry name" value="RL5-like"/>
    <property type="match status" value="1"/>
</dbReference>
<dbReference type="PROSITE" id="PS00358">
    <property type="entry name" value="RIBOSOMAL_L5"/>
    <property type="match status" value="1"/>
</dbReference>
<accession>Q0ID17</accession>
<organism>
    <name type="scientific">Synechococcus sp. (strain CC9311)</name>
    <dbReference type="NCBI Taxonomy" id="64471"/>
    <lineage>
        <taxon>Bacteria</taxon>
        <taxon>Bacillati</taxon>
        <taxon>Cyanobacteriota</taxon>
        <taxon>Cyanophyceae</taxon>
        <taxon>Synechococcales</taxon>
        <taxon>Synechococcaceae</taxon>
        <taxon>Synechococcus</taxon>
    </lineage>
</organism>
<reference key="1">
    <citation type="journal article" date="2006" name="Proc. Natl. Acad. Sci. U.S.A.">
        <title>Genome sequence of Synechococcus CC9311: insights into adaptation to a coastal environment.</title>
        <authorList>
            <person name="Palenik B."/>
            <person name="Ren Q."/>
            <person name="Dupont C.L."/>
            <person name="Myers G.S."/>
            <person name="Heidelberg J.F."/>
            <person name="Badger J.H."/>
            <person name="Madupu R."/>
            <person name="Nelson W.C."/>
            <person name="Brinkac L.M."/>
            <person name="Dodson R.J."/>
            <person name="Durkin A.S."/>
            <person name="Daugherty S.C."/>
            <person name="Sullivan S.A."/>
            <person name="Khouri H."/>
            <person name="Mohamoud Y."/>
            <person name="Halpin R."/>
            <person name="Paulsen I.T."/>
        </authorList>
    </citation>
    <scope>NUCLEOTIDE SEQUENCE [LARGE SCALE GENOMIC DNA]</scope>
    <source>
        <strain>CC9311</strain>
    </source>
</reference>